<sequence length="102" mass="11197">MVQVVSQENFADSIASGLVLIDFFAEWCGPCKMLTPVLEALAAELPHVTILKVDIDSSPRPAEQYSVSSIPTLILFKDGKEVERSVGLKDKDSLIKLISKHQ</sequence>
<proteinExistence type="inferred from homology"/>
<keyword id="KW-1015">Disulfide bond</keyword>
<keyword id="KW-0249">Electron transport</keyword>
<keyword id="KW-0676">Redox-active center</keyword>
<keyword id="KW-1185">Reference proteome</keyword>
<keyword id="KW-0813">Transport</keyword>
<feature type="chain" id="PRO_0000120085" description="Thioredoxin">
    <location>
        <begin position="1"/>
        <end position="102"/>
    </location>
</feature>
<feature type="domain" description="Thioredoxin" evidence="1">
    <location>
        <begin position="1"/>
        <end position="102"/>
    </location>
</feature>
<feature type="disulfide bond" description="Redox-active" evidence="1">
    <location>
        <begin position="28"/>
        <end position="31"/>
    </location>
</feature>
<reference key="1">
    <citation type="journal article" date="1998" name="Science">
        <title>Genome sequence of an obligate intracellular pathogen of humans: Chlamydia trachomatis.</title>
        <authorList>
            <person name="Stephens R.S."/>
            <person name="Kalman S."/>
            <person name="Lammel C.J."/>
            <person name="Fan J."/>
            <person name="Marathe R."/>
            <person name="Aravind L."/>
            <person name="Mitchell W.P."/>
            <person name="Olinger L."/>
            <person name="Tatusov R.L."/>
            <person name="Zhao Q."/>
            <person name="Koonin E.V."/>
            <person name="Davis R.W."/>
        </authorList>
    </citation>
    <scope>NUCLEOTIDE SEQUENCE [LARGE SCALE GENOMIC DNA]</scope>
    <source>
        <strain>ATCC VR-885 / DSM 19411 / UW-3/Cx</strain>
    </source>
</reference>
<accession>O84544</accession>
<comment type="function">
    <text>Participates in various redox reactions through the reversible oxidation of its active center dithiol to a disulfide and catalyzes dithiol-disulfide exchange reactions.</text>
</comment>
<comment type="similarity">
    <text evidence="2">Belongs to the thioredoxin family.</text>
</comment>
<gene>
    <name type="primary">trxA</name>
    <name type="ordered locus">CT_539</name>
</gene>
<protein>
    <recommendedName>
        <fullName>Thioredoxin</fullName>
        <shortName>Trx</shortName>
    </recommendedName>
</protein>
<organism>
    <name type="scientific">Chlamydia trachomatis serovar D (strain ATCC VR-885 / DSM 19411 / UW-3/Cx)</name>
    <dbReference type="NCBI Taxonomy" id="272561"/>
    <lineage>
        <taxon>Bacteria</taxon>
        <taxon>Pseudomonadati</taxon>
        <taxon>Chlamydiota</taxon>
        <taxon>Chlamydiia</taxon>
        <taxon>Chlamydiales</taxon>
        <taxon>Chlamydiaceae</taxon>
        <taxon>Chlamydia/Chlamydophila group</taxon>
        <taxon>Chlamydia</taxon>
    </lineage>
</organism>
<evidence type="ECO:0000255" key="1">
    <source>
        <dbReference type="PROSITE-ProRule" id="PRU00691"/>
    </source>
</evidence>
<evidence type="ECO:0000305" key="2"/>
<name>THIO_CHLTR</name>
<dbReference type="EMBL" id="AE001273">
    <property type="protein sequence ID" value="AAC68141.1"/>
    <property type="molecule type" value="Genomic_DNA"/>
</dbReference>
<dbReference type="PIR" id="B71503">
    <property type="entry name" value="B71503"/>
</dbReference>
<dbReference type="RefSeq" id="NP_220054.1">
    <property type="nucleotide sequence ID" value="NC_000117.1"/>
</dbReference>
<dbReference type="RefSeq" id="WP_009871903.1">
    <property type="nucleotide sequence ID" value="NC_000117.1"/>
</dbReference>
<dbReference type="SMR" id="O84544"/>
<dbReference type="FunCoup" id="O84544">
    <property type="interactions" value="200"/>
</dbReference>
<dbReference type="STRING" id="272561.CT_539"/>
<dbReference type="EnsemblBacteria" id="AAC68141">
    <property type="protein sequence ID" value="AAC68141"/>
    <property type="gene ID" value="CT_539"/>
</dbReference>
<dbReference type="GeneID" id="884317"/>
<dbReference type="KEGG" id="ctr:CT_539"/>
<dbReference type="PATRIC" id="fig|272561.5.peg.584"/>
<dbReference type="HOGENOM" id="CLU_090389_10_4_0"/>
<dbReference type="InParanoid" id="O84544"/>
<dbReference type="OrthoDB" id="9790390at2"/>
<dbReference type="Proteomes" id="UP000000431">
    <property type="component" value="Chromosome"/>
</dbReference>
<dbReference type="GO" id="GO:0005737">
    <property type="term" value="C:cytoplasm"/>
    <property type="evidence" value="ECO:0000318"/>
    <property type="project" value="GO_Central"/>
</dbReference>
<dbReference type="GO" id="GO:0005829">
    <property type="term" value="C:cytosol"/>
    <property type="evidence" value="ECO:0000318"/>
    <property type="project" value="GO_Central"/>
</dbReference>
<dbReference type="GO" id="GO:0015035">
    <property type="term" value="F:protein-disulfide reductase activity"/>
    <property type="evidence" value="ECO:0000318"/>
    <property type="project" value="GO_Central"/>
</dbReference>
<dbReference type="GO" id="GO:0045454">
    <property type="term" value="P:cell redox homeostasis"/>
    <property type="evidence" value="ECO:0000318"/>
    <property type="project" value="GO_Central"/>
</dbReference>
<dbReference type="CDD" id="cd02947">
    <property type="entry name" value="TRX_family"/>
    <property type="match status" value="1"/>
</dbReference>
<dbReference type="FunFam" id="3.40.30.10:FF:000001">
    <property type="entry name" value="Thioredoxin"/>
    <property type="match status" value="1"/>
</dbReference>
<dbReference type="Gene3D" id="3.40.30.10">
    <property type="entry name" value="Glutaredoxin"/>
    <property type="match status" value="1"/>
</dbReference>
<dbReference type="InterPro" id="IPR005746">
    <property type="entry name" value="Thioredoxin"/>
</dbReference>
<dbReference type="InterPro" id="IPR036249">
    <property type="entry name" value="Thioredoxin-like_sf"/>
</dbReference>
<dbReference type="InterPro" id="IPR017937">
    <property type="entry name" value="Thioredoxin_CS"/>
</dbReference>
<dbReference type="InterPro" id="IPR013766">
    <property type="entry name" value="Thioredoxin_domain"/>
</dbReference>
<dbReference type="NCBIfam" id="TIGR01068">
    <property type="entry name" value="thioredoxin"/>
    <property type="match status" value="1"/>
</dbReference>
<dbReference type="PANTHER" id="PTHR45663">
    <property type="entry name" value="GEO12009P1"/>
    <property type="match status" value="1"/>
</dbReference>
<dbReference type="PANTHER" id="PTHR45663:SF11">
    <property type="entry name" value="GEO12009P1"/>
    <property type="match status" value="1"/>
</dbReference>
<dbReference type="Pfam" id="PF00085">
    <property type="entry name" value="Thioredoxin"/>
    <property type="match status" value="1"/>
</dbReference>
<dbReference type="PIRSF" id="PIRSF000077">
    <property type="entry name" value="Thioredoxin"/>
    <property type="match status" value="1"/>
</dbReference>
<dbReference type="PRINTS" id="PR00421">
    <property type="entry name" value="THIOREDOXIN"/>
</dbReference>
<dbReference type="SUPFAM" id="SSF52833">
    <property type="entry name" value="Thioredoxin-like"/>
    <property type="match status" value="1"/>
</dbReference>
<dbReference type="PROSITE" id="PS00194">
    <property type="entry name" value="THIOREDOXIN_1"/>
    <property type="match status" value="1"/>
</dbReference>
<dbReference type="PROSITE" id="PS51352">
    <property type="entry name" value="THIOREDOXIN_2"/>
    <property type="match status" value="1"/>
</dbReference>